<proteinExistence type="inferred from homology"/>
<evidence type="ECO:0000255" key="1">
    <source>
        <dbReference type="PROSITE-ProRule" id="PRU00303"/>
    </source>
</evidence>
<evidence type="ECO:0000256" key="2">
    <source>
        <dbReference type="SAM" id="MobiDB-lite"/>
    </source>
</evidence>
<protein>
    <recommendedName>
        <fullName>Uncharacterized lipoprotein SAOUHSC_02650</fullName>
    </recommendedName>
</protein>
<accession>Q2FVQ2</accession>
<gene>
    <name type="ordered locus">SAOUHSC_02650</name>
</gene>
<dbReference type="EMBL" id="CP000253">
    <property type="protein sequence ID" value="ABD31658.1"/>
    <property type="molecule type" value="Genomic_DNA"/>
</dbReference>
<dbReference type="RefSeq" id="WP_000827000.1">
    <property type="nucleotide sequence ID" value="NZ_LS483365.1"/>
</dbReference>
<dbReference type="RefSeq" id="YP_501112.1">
    <property type="nucleotide sequence ID" value="NC_007795.1"/>
</dbReference>
<dbReference type="STRING" id="93061.SAOUHSC_02650"/>
<dbReference type="PaxDb" id="1280-SAXN108_2622"/>
<dbReference type="GeneID" id="3921212"/>
<dbReference type="KEGG" id="sao:SAOUHSC_02650"/>
<dbReference type="PATRIC" id="fig|93061.5.peg.2397"/>
<dbReference type="eggNOG" id="ENOG5030EVE">
    <property type="taxonomic scope" value="Bacteria"/>
</dbReference>
<dbReference type="HOGENOM" id="CLU_088585_0_0_9"/>
<dbReference type="OrthoDB" id="2414075at2"/>
<dbReference type="PRO" id="PR:Q2FVQ2"/>
<dbReference type="Proteomes" id="UP000008816">
    <property type="component" value="Chromosome"/>
</dbReference>
<dbReference type="GO" id="GO:0005886">
    <property type="term" value="C:plasma membrane"/>
    <property type="evidence" value="ECO:0007669"/>
    <property type="project" value="UniProtKB-SubCell"/>
</dbReference>
<dbReference type="PROSITE" id="PS51257">
    <property type="entry name" value="PROKAR_LIPOPROTEIN"/>
    <property type="match status" value="1"/>
</dbReference>
<reference key="1">
    <citation type="book" date="2006" name="Gram positive pathogens, 2nd edition">
        <title>The Staphylococcus aureus NCTC 8325 genome.</title>
        <editorList>
            <person name="Fischetti V."/>
            <person name="Novick R."/>
            <person name="Ferretti J."/>
            <person name="Portnoy D."/>
            <person name="Rood J."/>
        </editorList>
        <authorList>
            <person name="Gillaspy A.F."/>
            <person name="Worrell V."/>
            <person name="Orvis J."/>
            <person name="Roe B.A."/>
            <person name="Dyer D.W."/>
            <person name="Iandolo J.J."/>
        </authorList>
    </citation>
    <scope>NUCLEOTIDE SEQUENCE [LARGE SCALE GENOMIC DNA]</scope>
    <source>
        <strain>NCTC 8325 / PS 47</strain>
    </source>
</reference>
<organism>
    <name type="scientific">Staphylococcus aureus (strain NCTC 8325 / PS 47)</name>
    <dbReference type="NCBI Taxonomy" id="93061"/>
    <lineage>
        <taxon>Bacteria</taxon>
        <taxon>Bacillati</taxon>
        <taxon>Bacillota</taxon>
        <taxon>Bacilli</taxon>
        <taxon>Bacillales</taxon>
        <taxon>Staphylococcaceae</taxon>
        <taxon>Staphylococcus</taxon>
    </lineage>
</organism>
<name>Y2650_STAA8</name>
<comment type="subcellular location">
    <subcellularLocation>
        <location evidence="1">Cell membrane</location>
        <topology evidence="1">Lipid-anchor</topology>
    </subcellularLocation>
</comment>
<sequence>MKRLVTGLLALSLFLAACGQDSDQQKDGNKEKDDKAKTEQQDKKTNDSSKDKKDNKDDSKDVNKDNKDNSANDNQQQSNSNATNNDQNQTNNNQSSNNQANNNQKSSYVAPYYGQNAAPVARQIYPFNGNKNQALQQLPNFQTALNAANNEANKFGSNNKVYNDYSIEEHNGNYKYVFSFKDPNANGKYSIVTVDYTGQAMVTDPNYQQ</sequence>
<keyword id="KW-1003">Cell membrane</keyword>
<keyword id="KW-0449">Lipoprotein</keyword>
<keyword id="KW-0472">Membrane</keyword>
<keyword id="KW-0564">Palmitate</keyword>
<keyword id="KW-1185">Reference proteome</keyword>
<keyword id="KW-0732">Signal</keyword>
<feature type="signal peptide" evidence="1">
    <location>
        <begin position="1"/>
        <end position="17"/>
    </location>
</feature>
<feature type="chain" id="PRO_0000296181" description="Uncharacterized lipoprotein SAOUHSC_02650">
    <location>
        <begin position="18"/>
        <end position="209"/>
    </location>
</feature>
<feature type="region of interest" description="Disordered" evidence="2">
    <location>
        <begin position="17"/>
        <end position="105"/>
    </location>
</feature>
<feature type="compositionally biased region" description="Basic and acidic residues" evidence="2">
    <location>
        <begin position="23"/>
        <end position="70"/>
    </location>
</feature>
<feature type="compositionally biased region" description="Low complexity" evidence="2">
    <location>
        <begin position="71"/>
        <end position="105"/>
    </location>
</feature>
<feature type="lipid moiety-binding region" description="N-palmitoyl cysteine" evidence="1">
    <location>
        <position position="18"/>
    </location>
</feature>
<feature type="lipid moiety-binding region" description="S-diacylglycerol cysteine" evidence="1">
    <location>
        <position position="18"/>
    </location>
</feature>